<feature type="chain" id="PRO_0000230228" description="Histidinol-phosphate aminotransferase">
    <location>
        <begin position="1"/>
        <end position="363"/>
    </location>
</feature>
<feature type="modified residue" description="N6-(pyridoxal phosphate)lysine" evidence="1">
    <location>
        <position position="218"/>
    </location>
</feature>
<protein>
    <recommendedName>
        <fullName evidence="1">Histidinol-phosphate aminotransferase</fullName>
        <ecNumber evidence="1">2.6.1.9</ecNumber>
    </recommendedName>
    <alternativeName>
        <fullName evidence="1">Imidazole acetol-phosphate transaminase</fullName>
    </alternativeName>
</protein>
<sequence length="363" mass="38624">MSTSSILHLVREDLRAFAGYSSARTSALQGDVWLNANESAWGNPADPSASTRRYPDPQPQGLRSALAALYGCAPEQLLIGRGSDEAIDLLVRGLCVPERDAVLVTPPVFGMYAVCARLQNAPLVDVPLVDVPDGFHADIPAIVAAALASNAKLVFLCSPSNPAGSAIALDQIEPALQALQGKALVVVDEAYGEFSEVPSAVGLLARYDNLAVLRTLSKAHALAAARIGTLIANAELIAVLRRCQAPYPVPTPCAAMAEQALSAPALEVTRRRIAEVRSERARVHKALVQLPGVRQVYPSQGNFLLVRFDDAEAAFQALLEAGVVVRDQRAVPRLSDALRITLGTHEQNERVLSALQRTQEAAA</sequence>
<proteinExistence type="inferred from homology"/>
<evidence type="ECO:0000255" key="1">
    <source>
        <dbReference type="HAMAP-Rule" id="MF_01023"/>
    </source>
</evidence>
<reference key="1">
    <citation type="journal article" date="2005" name="Jpn. Agric. Res. Q.">
        <title>Genome sequence of Xanthomonas oryzae pv. oryzae suggests contribution of large numbers of effector genes and insertion sequences to its race diversity.</title>
        <authorList>
            <person name="Ochiai H."/>
            <person name="Inoue Y."/>
            <person name="Takeya M."/>
            <person name="Sasaki A."/>
            <person name="Kaku H."/>
        </authorList>
    </citation>
    <scope>NUCLEOTIDE SEQUENCE [LARGE SCALE GENOMIC DNA]</scope>
    <source>
        <strain>MAFF 311018</strain>
    </source>
</reference>
<organism>
    <name type="scientific">Xanthomonas oryzae pv. oryzae (strain MAFF 311018)</name>
    <dbReference type="NCBI Taxonomy" id="342109"/>
    <lineage>
        <taxon>Bacteria</taxon>
        <taxon>Pseudomonadati</taxon>
        <taxon>Pseudomonadota</taxon>
        <taxon>Gammaproteobacteria</taxon>
        <taxon>Lysobacterales</taxon>
        <taxon>Lysobacteraceae</taxon>
        <taxon>Xanthomonas</taxon>
    </lineage>
</organism>
<gene>
    <name evidence="1" type="primary">hisC</name>
    <name type="ordered locus">XOO2120</name>
</gene>
<keyword id="KW-0028">Amino-acid biosynthesis</keyword>
<keyword id="KW-0032">Aminotransferase</keyword>
<keyword id="KW-0368">Histidine biosynthesis</keyword>
<keyword id="KW-0663">Pyridoxal phosphate</keyword>
<keyword id="KW-0808">Transferase</keyword>
<dbReference type="EC" id="2.6.1.9" evidence="1"/>
<dbReference type="EMBL" id="AP008229">
    <property type="protein sequence ID" value="BAE68875.1"/>
    <property type="molecule type" value="Genomic_DNA"/>
</dbReference>
<dbReference type="RefSeq" id="WP_011408488.1">
    <property type="nucleotide sequence ID" value="NC_007705.1"/>
</dbReference>
<dbReference type="SMR" id="Q2P3K2"/>
<dbReference type="KEGG" id="xom:XOO2120"/>
<dbReference type="HOGENOM" id="CLU_017584_3_1_6"/>
<dbReference type="UniPathway" id="UPA00031">
    <property type="reaction ID" value="UER00012"/>
</dbReference>
<dbReference type="GO" id="GO:0004400">
    <property type="term" value="F:histidinol-phosphate transaminase activity"/>
    <property type="evidence" value="ECO:0007669"/>
    <property type="project" value="UniProtKB-UniRule"/>
</dbReference>
<dbReference type="GO" id="GO:0030170">
    <property type="term" value="F:pyridoxal phosphate binding"/>
    <property type="evidence" value="ECO:0007669"/>
    <property type="project" value="InterPro"/>
</dbReference>
<dbReference type="GO" id="GO:0000105">
    <property type="term" value="P:L-histidine biosynthetic process"/>
    <property type="evidence" value="ECO:0007669"/>
    <property type="project" value="UniProtKB-UniRule"/>
</dbReference>
<dbReference type="CDD" id="cd00609">
    <property type="entry name" value="AAT_like"/>
    <property type="match status" value="1"/>
</dbReference>
<dbReference type="Gene3D" id="3.90.1150.10">
    <property type="entry name" value="Aspartate Aminotransferase, domain 1"/>
    <property type="match status" value="1"/>
</dbReference>
<dbReference type="Gene3D" id="3.40.640.10">
    <property type="entry name" value="Type I PLP-dependent aspartate aminotransferase-like (Major domain)"/>
    <property type="match status" value="1"/>
</dbReference>
<dbReference type="HAMAP" id="MF_01023">
    <property type="entry name" value="HisC_aminotrans_2"/>
    <property type="match status" value="1"/>
</dbReference>
<dbReference type="InterPro" id="IPR004839">
    <property type="entry name" value="Aminotransferase_I/II_large"/>
</dbReference>
<dbReference type="InterPro" id="IPR005861">
    <property type="entry name" value="HisP_aminotrans"/>
</dbReference>
<dbReference type="InterPro" id="IPR015424">
    <property type="entry name" value="PyrdxlP-dep_Trfase"/>
</dbReference>
<dbReference type="InterPro" id="IPR015421">
    <property type="entry name" value="PyrdxlP-dep_Trfase_major"/>
</dbReference>
<dbReference type="InterPro" id="IPR015422">
    <property type="entry name" value="PyrdxlP-dep_Trfase_small"/>
</dbReference>
<dbReference type="NCBIfam" id="TIGR01141">
    <property type="entry name" value="hisC"/>
    <property type="match status" value="1"/>
</dbReference>
<dbReference type="PANTHER" id="PTHR42885:SF2">
    <property type="entry name" value="HISTIDINOL-PHOSPHATE AMINOTRANSFERASE"/>
    <property type="match status" value="1"/>
</dbReference>
<dbReference type="PANTHER" id="PTHR42885">
    <property type="entry name" value="HISTIDINOL-PHOSPHATE AMINOTRANSFERASE-RELATED"/>
    <property type="match status" value="1"/>
</dbReference>
<dbReference type="Pfam" id="PF00155">
    <property type="entry name" value="Aminotran_1_2"/>
    <property type="match status" value="1"/>
</dbReference>
<dbReference type="SUPFAM" id="SSF53383">
    <property type="entry name" value="PLP-dependent transferases"/>
    <property type="match status" value="1"/>
</dbReference>
<comment type="catalytic activity">
    <reaction evidence="1">
        <text>L-histidinol phosphate + 2-oxoglutarate = 3-(imidazol-4-yl)-2-oxopropyl phosphate + L-glutamate</text>
        <dbReference type="Rhea" id="RHEA:23744"/>
        <dbReference type="ChEBI" id="CHEBI:16810"/>
        <dbReference type="ChEBI" id="CHEBI:29985"/>
        <dbReference type="ChEBI" id="CHEBI:57766"/>
        <dbReference type="ChEBI" id="CHEBI:57980"/>
        <dbReference type="EC" id="2.6.1.9"/>
    </reaction>
</comment>
<comment type="cofactor">
    <cofactor evidence="1">
        <name>pyridoxal 5'-phosphate</name>
        <dbReference type="ChEBI" id="CHEBI:597326"/>
    </cofactor>
</comment>
<comment type="pathway">
    <text evidence="1">Amino-acid biosynthesis; L-histidine biosynthesis; L-histidine from 5-phospho-alpha-D-ribose 1-diphosphate: step 7/9.</text>
</comment>
<comment type="subunit">
    <text evidence="1">Homodimer.</text>
</comment>
<comment type="similarity">
    <text evidence="1">Belongs to the class-II pyridoxal-phosphate-dependent aminotransferase family. Histidinol-phosphate aminotransferase subfamily.</text>
</comment>
<accession>Q2P3K2</accession>
<name>HIS8_XANOM</name>